<gene>
    <name evidence="1" type="primary">ispD</name>
    <name type="ordered locus">BCG_3647c</name>
</gene>
<name>ISPD_MYCBP</name>
<organism>
    <name type="scientific">Mycobacterium bovis (strain BCG / Pasteur 1173P2)</name>
    <dbReference type="NCBI Taxonomy" id="410289"/>
    <lineage>
        <taxon>Bacteria</taxon>
        <taxon>Bacillati</taxon>
        <taxon>Actinomycetota</taxon>
        <taxon>Actinomycetes</taxon>
        <taxon>Mycobacteriales</taxon>
        <taxon>Mycobacteriaceae</taxon>
        <taxon>Mycobacterium</taxon>
        <taxon>Mycobacterium tuberculosis complex</taxon>
    </lineage>
</organism>
<protein>
    <recommendedName>
        <fullName evidence="1">2-C-methyl-D-erythritol 4-phosphate cytidylyltransferase</fullName>
        <ecNumber evidence="1">2.7.7.60</ecNumber>
    </recommendedName>
    <alternativeName>
        <fullName evidence="1">4-diphosphocytidyl-2C-methyl-D-erythritol synthase</fullName>
    </alternativeName>
    <alternativeName>
        <fullName evidence="1">MEP cytidylyltransferase</fullName>
        <shortName evidence="1">MCT</shortName>
    </alternativeName>
</protein>
<sequence>MVREAGEVVAIVPAAGSGERLAVGVPKAFYQLDGQTLIERAVDGLLDSGVVDTVVVAVPADRTDEARQILGHRAMIVAGGSNRTDTVNLALTVLSGTAEPEFVLVHDAARALTPPALVARVVEALRDGYAAVVPVLPLSDTIKAVDANGVVLGTPERAGLRAVQTPQGFTTDLLLRSYQRGSLDLPAAEYTDDASLVEHIGGQVQVVDGDPLAFKITTKLDLLLAQAIVRG</sequence>
<dbReference type="EC" id="2.7.7.60" evidence="1"/>
<dbReference type="EMBL" id="AM408590">
    <property type="protein sequence ID" value="CAL73636.1"/>
    <property type="molecule type" value="Genomic_DNA"/>
</dbReference>
<dbReference type="RefSeq" id="WP_003419436.1">
    <property type="nucleotide sequence ID" value="NC_008769.1"/>
</dbReference>
<dbReference type="SMR" id="A1KPR8"/>
<dbReference type="GeneID" id="45427570"/>
<dbReference type="KEGG" id="mbb:BCG_3647c"/>
<dbReference type="HOGENOM" id="CLU_061281_1_1_11"/>
<dbReference type="UniPathway" id="UPA00056">
    <property type="reaction ID" value="UER00093"/>
</dbReference>
<dbReference type="Proteomes" id="UP000001472">
    <property type="component" value="Chromosome"/>
</dbReference>
<dbReference type="GO" id="GO:0050518">
    <property type="term" value="F:2-C-methyl-D-erythritol 4-phosphate cytidylyltransferase activity"/>
    <property type="evidence" value="ECO:0007669"/>
    <property type="project" value="UniProtKB-UniRule"/>
</dbReference>
<dbReference type="GO" id="GO:0019288">
    <property type="term" value="P:isopentenyl diphosphate biosynthetic process, methylerythritol 4-phosphate pathway"/>
    <property type="evidence" value="ECO:0007669"/>
    <property type="project" value="UniProtKB-UniRule"/>
</dbReference>
<dbReference type="CDD" id="cd02516">
    <property type="entry name" value="CDP-ME_synthetase"/>
    <property type="match status" value="1"/>
</dbReference>
<dbReference type="FunFam" id="3.90.550.10:FF:000208">
    <property type="entry name" value="2-C-methyl-D-erythritol 4-phosphate cytidylyltransferase"/>
    <property type="match status" value="1"/>
</dbReference>
<dbReference type="Gene3D" id="3.90.550.10">
    <property type="entry name" value="Spore Coat Polysaccharide Biosynthesis Protein SpsA, Chain A"/>
    <property type="match status" value="1"/>
</dbReference>
<dbReference type="HAMAP" id="MF_00108">
    <property type="entry name" value="IspD"/>
    <property type="match status" value="1"/>
</dbReference>
<dbReference type="InterPro" id="IPR001228">
    <property type="entry name" value="IspD"/>
</dbReference>
<dbReference type="InterPro" id="IPR034683">
    <property type="entry name" value="IspD/TarI"/>
</dbReference>
<dbReference type="InterPro" id="IPR050088">
    <property type="entry name" value="IspD/TarI_cytidylyltransf_bact"/>
</dbReference>
<dbReference type="InterPro" id="IPR018294">
    <property type="entry name" value="ISPD_synthase_CS"/>
</dbReference>
<dbReference type="InterPro" id="IPR029044">
    <property type="entry name" value="Nucleotide-diphossugar_trans"/>
</dbReference>
<dbReference type="NCBIfam" id="TIGR00453">
    <property type="entry name" value="ispD"/>
    <property type="match status" value="1"/>
</dbReference>
<dbReference type="PANTHER" id="PTHR32125">
    <property type="entry name" value="2-C-METHYL-D-ERYTHRITOL 4-PHOSPHATE CYTIDYLYLTRANSFERASE, CHLOROPLASTIC"/>
    <property type="match status" value="1"/>
</dbReference>
<dbReference type="PANTHER" id="PTHR32125:SF4">
    <property type="entry name" value="2-C-METHYL-D-ERYTHRITOL 4-PHOSPHATE CYTIDYLYLTRANSFERASE, CHLOROPLASTIC"/>
    <property type="match status" value="1"/>
</dbReference>
<dbReference type="Pfam" id="PF01128">
    <property type="entry name" value="IspD"/>
    <property type="match status" value="1"/>
</dbReference>
<dbReference type="SUPFAM" id="SSF53448">
    <property type="entry name" value="Nucleotide-diphospho-sugar transferases"/>
    <property type="match status" value="1"/>
</dbReference>
<dbReference type="PROSITE" id="PS01295">
    <property type="entry name" value="ISPD"/>
    <property type="match status" value="1"/>
</dbReference>
<reference key="1">
    <citation type="journal article" date="2007" name="Proc. Natl. Acad. Sci. U.S.A.">
        <title>Genome plasticity of BCG and impact on vaccine efficacy.</title>
        <authorList>
            <person name="Brosch R."/>
            <person name="Gordon S.V."/>
            <person name="Garnier T."/>
            <person name="Eiglmeier K."/>
            <person name="Frigui W."/>
            <person name="Valenti P."/>
            <person name="Dos Santos S."/>
            <person name="Duthoy S."/>
            <person name="Lacroix C."/>
            <person name="Garcia-Pelayo C."/>
            <person name="Inwald J.K."/>
            <person name="Golby P."/>
            <person name="Garcia J.N."/>
            <person name="Hewinson R.G."/>
            <person name="Behr M.A."/>
            <person name="Quail M.A."/>
            <person name="Churcher C."/>
            <person name="Barrell B.G."/>
            <person name="Parkhill J."/>
            <person name="Cole S.T."/>
        </authorList>
    </citation>
    <scope>NUCLEOTIDE SEQUENCE [LARGE SCALE GENOMIC DNA]</scope>
    <source>
        <strain>BCG / Pasteur 1173P2</strain>
    </source>
</reference>
<proteinExistence type="inferred from homology"/>
<comment type="function">
    <text evidence="1">Catalyzes the formation of 4-diphosphocytidyl-2-C-methyl-D-erythritol from CTP and 2-C-methyl-D-erythritol 4-phosphate (MEP).</text>
</comment>
<comment type="catalytic activity">
    <reaction evidence="1">
        <text>2-C-methyl-D-erythritol 4-phosphate + CTP + H(+) = 4-CDP-2-C-methyl-D-erythritol + diphosphate</text>
        <dbReference type="Rhea" id="RHEA:13429"/>
        <dbReference type="ChEBI" id="CHEBI:15378"/>
        <dbReference type="ChEBI" id="CHEBI:33019"/>
        <dbReference type="ChEBI" id="CHEBI:37563"/>
        <dbReference type="ChEBI" id="CHEBI:57823"/>
        <dbReference type="ChEBI" id="CHEBI:58262"/>
        <dbReference type="EC" id="2.7.7.60"/>
    </reaction>
</comment>
<comment type="pathway">
    <text evidence="1">Isoprenoid biosynthesis; isopentenyl diphosphate biosynthesis via DXP pathway; isopentenyl diphosphate from 1-deoxy-D-xylulose 5-phosphate: step 2/6.</text>
</comment>
<comment type="similarity">
    <text evidence="1">Belongs to the IspD/TarI cytidylyltransferase family. IspD subfamily.</text>
</comment>
<feature type="chain" id="PRO_1000022930" description="2-C-methyl-D-erythritol 4-phosphate cytidylyltransferase">
    <location>
        <begin position="1"/>
        <end position="231"/>
    </location>
</feature>
<feature type="site" description="Transition state stabilizer" evidence="1">
    <location>
        <position position="20"/>
    </location>
</feature>
<feature type="site" description="Transition state stabilizer" evidence="1">
    <location>
        <position position="27"/>
    </location>
</feature>
<feature type="site" description="Positions MEP for the nucleophilic attack" evidence="1">
    <location>
        <position position="157"/>
    </location>
</feature>
<feature type="site" description="Positions MEP for the nucleophilic attack" evidence="1">
    <location>
        <position position="215"/>
    </location>
</feature>
<accession>A1KPR8</accession>
<evidence type="ECO:0000255" key="1">
    <source>
        <dbReference type="HAMAP-Rule" id="MF_00108"/>
    </source>
</evidence>
<keyword id="KW-0414">Isoprene biosynthesis</keyword>
<keyword id="KW-0548">Nucleotidyltransferase</keyword>
<keyword id="KW-0808">Transferase</keyword>